<comment type="function">
    <text evidence="1">This protein is one of the early assembly proteins of the 50S ribosomal subunit, although it is not seen to bind rRNA by itself. It is important during the early stages of 50S assembly.</text>
</comment>
<comment type="subunit">
    <text evidence="1">Part of the 50S ribosomal subunit.</text>
</comment>
<comment type="similarity">
    <text evidence="1">Belongs to the universal ribosomal protein uL13 family.</text>
</comment>
<name>RL13_TREPS</name>
<feature type="chain" id="PRO_1000144193" description="Large ribosomal subunit protein uL13">
    <location>
        <begin position="1"/>
        <end position="142"/>
    </location>
</feature>
<proteinExistence type="inferred from homology"/>
<protein>
    <recommendedName>
        <fullName evidence="1">Large ribosomal subunit protein uL13</fullName>
    </recommendedName>
    <alternativeName>
        <fullName evidence="2">50S ribosomal protein L13</fullName>
    </alternativeName>
</protein>
<keyword id="KW-0687">Ribonucleoprotein</keyword>
<keyword id="KW-0689">Ribosomal protein</keyword>
<gene>
    <name evidence="1" type="primary">rplM</name>
    <name type="ordered locus">TPASS_1025</name>
</gene>
<dbReference type="EMBL" id="CP000805">
    <property type="protein sequence ID" value="ACD71441.1"/>
    <property type="molecule type" value="Genomic_DNA"/>
</dbReference>
<dbReference type="RefSeq" id="WP_010882469.1">
    <property type="nucleotide sequence ID" value="NC_021508.1"/>
</dbReference>
<dbReference type="SMR" id="B2S4R2"/>
<dbReference type="GeneID" id="93876772"/>
<dbReference type="KEGG" id="tpp:TPASS_1025"/>
<dbReference type="PATRIC" id="fig|455434.6.peg.1014"/>
<dbReference type="Proteomes" id="UP000001202">
    <property type="component" value="Chromosome"/>
</dbReference>
<dbReference type="GO" id="GO:1990904">
    <property type="term" value="C:ribonucleoprotein complex"/>
    <property type="evidence" value="ECO:0007669"/>
    <property type="project" value="UniProtKB-KW"/>
</dbReference>
<dbReference type="GO" id="GO:0005840">
    <property type="term" value="C:ribosome"/>
    <property type="evidence" value="ECO:0007669"/>
    <property type="project" value="UniProtKB-KW"/>
</dbReference>
<dbReference type="GO" id="GO:0003729">
    <property type="term" value="F:mRNA binding"/>
    <property type="evidence" value="ECO:0007669"/>
    <property type="project" value="TreeGrafter"/>
</dbReference>
<dbReference type="GO" id="GO:0003735">
    <property type="term" value="F:structural constituent of ribosome"/>
    <property type="evidence" value="ECO:0007669"/>
    <property type="project" value="InterPro"/>
</dbReference>
<dbReference type="GO" id="GO:0017148">
    <property type="term" value="P:negative regulation of translation"/>
    <property type="evidence" value="ECO:0007669"/>
    <property type="project" value="TreeGrafter"/>
</dbReference>
<dbReference type="GO" id="GO:0006412">
    <property type="term" value="P:translation"/>
    <property type="evidence" value="ECO:0007669"/>
    <property type="project" value="UniProtKB-UniRule"/>
</dbReference>
<dbReference type="CDD" id="cd00392">
    <property type="entry name" value="Ribosomal_L13"/>
    <property type="match status" value="1"/>
</dbReference>
<dbReference type="Gene3D" id="3.90.1180.10">
    <property type="entry name" value="Ribosomal protein L13"/>
    <property type="match status" value="1"/>
</dbReference>
<dbReference type="HAMAP" id="MF_01366">
    <property type="entry name" value="Ribosomal_uL13"/>
    <property type="match status" value="1"/>
</dbReference>
<dbReference type="InterPro" id="IPR005822">
    <property type="entry name" value="Ribosomal_uL13"/>
</dbReference>
<dbReference type="InterPro" id="IPR005823">
    <property type="entry name" value="Ribosomal_uL13_bac-type"/>
</dbReference>
<dbReference type="InterPro" id="IPR023563">
    <property type="entry name" value="Ribosomal_uL13_CS"/>
</dbReference>
<dbReference type="InterPro" id="IPR036899">
    <property type="entry name" value="Ribosomal_uL13_sf"/>
</dbReference>
<dbReference type="NCBIfam" id="TIGR01066">
    <property type="entry name" value="rplM_bact"/>
    <property type="match status" value="1"/>
</dbReference>
<dbReference type="PANTHER" id="PTHR11545:SF2">
    <property type="entry name" value="LARGE RIBOSOMAL SUBUNIT PROTEIN UL13M"/>
    <property type="match status" value="1"/>
</dbReference>
<dbReference type="PANTHER" id="PTHR11545">
    <property type="entry name" value="RIBOSOMAL PROTEIN L13"/>
    <property type="match status" value="1"/>
</dbReference>
<dbReference type="Pfam" id="PF00572">
    <property type="entry name" value="Ribosomal_L13"/>
    <property type="match status" value="1"/>
</dbReference>
<dbReference type="PIRSF" id="PIRSF002181">
    <property type="entry name" value="Ribosomal_L13"/>
    <property type="match status" value="1"/>
</dbReference>
<dbReference type="SUPFAM" id="SSF52161">
    <property type="entry name" value="Ribosomal protein L13"/>
    <property type="match status" value="1"/>
</dbReference>
<dbReference type="PROSITE" id="PS00783">
    <property type="entry name" value="RIBOSOMAL_L13"/>
    <property type="match status" value="1"/>
</dbReference>
<sequence>MRTIFVNEREAVRAWHLIDAAGRPLGRVAARVACLLRGKHKASYTPNQEMGDYVVVINAEKVFLSGTKPKDKMYYRHSGYPGGLKSVSFSALVKRRPVEPLRHAVKGMLPKGPLGRKLIKNVKIYAGSVHPHESQNPVPLSC</sequence>
<accession>B2S4R2</accession>
<organism>
    <name type="scientific">Treponema pallidum subsp. pallidum (strain SS14)</name>
    <dbReference type="NCBI Taxonomy" id="455434"/>
    <lineage>
        <taxon>Bacteria</taxon>
        <taxon>Pseudomonadati</taxon>
        <taxon>Spirochaetota</taxon>
        <taxon>Spirochaetia</taxon>
        <taxon>Spirochaetales</taxon>
        <taxon>Treponemataceae</taxon>
        <taxon>Treponema</taxon>
    </lineage>
</organism>
<evidence type="ECO:0000255" key="1">
    <source>
        <dbReference type="HAMAP-Rule" id="MF_01366"/>
    </source>
</evidence>
<evidence type="ECO:0000305" key="2"/>
<reference key="1">
    <citation type="journal article" date="2008" name="BMC Microbiol.">
        <title>Complete genome sequence of Treponema pallidum ssp. pallidum strain SS14 determined with oligonucleotide arrays.</title>
        <authorList>
            <person name="Matejkova P."/>
            <person name="Strouhal M."/>
            <person name="Smajs D."/>
            <person name="Norris S.J."/>
            <person name="Palzkill T."/>
            <person name="Petrosino J.F."/>
            <person name="Sodergren E."/>
            <person name="Norton J.E."/>
            <person name="Singh J."/>
            <person name="Richmond T.A."/>
            <person name="Molla M.N."/>
            <person name="Albert T.J."/>
            <person name="Weinstock G.M."/>
        </authorList>
    </citation>
    <scope>NUCLEOTIDE SEQUENCE [LARGE SCALE GENOMIC DNA]</scope>
    <source>
        <strain>SS14</strain>
    </source>
</reference>